<feature type="chain" id="PRO_0000100621" description="Phosphoribosylformylglycinamidine synthase subunit PurQ">
    <location>
        <begin position="1"/>
        <end position="258"/>
    </location>
</feature>
<feature type="domain" description="Glutamine amidotransferase type-1" evidence="1">
    <location>
        <begin position="7"/>
        <end position="238"/>
    </location>
</feature>
<feature type="active site" description="Nucleophile" evidence="1">
    <location>
        <position position="97"/>
    </location>
</feature>
<feature type="active site" evidence="1">
    <location>
        <position position="220"/>
    </location>
</feature>
<feature type="active site" evidence="1">
    <location>
        <position position="222"/>
    </location>
</feature>
<evidence type="ECO:0000255" key="1">
    <source>
        <dbReference type="HAMAP-Rule" id="MF_00421"/>
    </source>
</evidence>
<dbReference type="EC" id="6.3.5.3" evidence="1"/>
<dbReference type="EC" id="3.5.1.2" evidence="1"/>
<dbReference type="EMBL" id="BA000011">
    <property type="protein sequence ID" value="BAB59411.1"/>
    <property type="molecule type" value="Genomic_DNA"/>
</dbReference>
<dbReference type="RefSeq" id="WP_010916526.1">
    <property type="nucleotide sequence ID" value="NC_002689.2"/>
</dbReference>
<dbReference type="SMR" id="Q97C36"/>
<dbReference type="STRING" id="273116.gene:9381042"/>
<dbReference type="PaxDb" id="273116-14324483"/>
<dbReference type="GeneID" id="1440784"/>
<dbReference type="KEGG" id="tvo:TVG0280999"/>
<dbReference type="eggNOG" id="arCOG00102">
    <property type="taxonomic scope" value="Archaea"/>
</dbReference>
<dbReference type="HOGENOM" id="CLU_001031_3_0_2"/>
<dbReference type="OrthoDB" id="6486at2157"/>
<dbReference type="PhylomeDB" id="Q97C36"/>
<dbReference type="UniPathway" id="UPA00074">
    <property type="reaction ID" value="UER00128"/>
</dbReference>
<dbReference type="Proteomes" id="UP000001017">
    <property type="component" value="Chromosome"/>
</dbReference>
<dbReference type="GO" id="GO:0005737">
    <property type="term" value="C:cytoplasm"/>
    <property type="evidence" value="ECO:0007669"/>
    <property type="project" value="UniProtKB-SubCell"/>
</dbReference>
<dbReference type="GO" id="GO:0005524">
    <property type="term" value="F:ATP binding"/>
    <property type="evidence" value="ECO:0007669"/>
    <property type="project" value="UniProtKB-KW"/>
</dbReference>
<dbReference type="GO" id="GO:0004359">
    <property type="term" value="F:glutaminase activity"/>
    <property type="evidence" value="ECO:0007669"/>
    <property type="project" value="UniProtKB-EC"/>
</dbReference>
<dbReference type="GO" id="GO:0004642">
    <property type="term" value="F:phosphoribosylformylglycinamidine synthase activity"/>
    <property type="evidence" value="ECO:0007669"/>
    <property type="project" value="UniProtKB-UniRule"/>
</dbReference>
<dbReference type="GO" id="GO:0006189">
    <property type="term" value="P:'de novo' IMP biosynthetic process"/>
    <property type="evidence" value="ECO:0007669"/>
    <property type="project" value="UniProtKB-UniRule"/>
</dbReference>
<dbReference type="CDD" id="cd01740">
    <property type="entry name" value="GATase1_FGAR_AT"/>
    <property type="match status" value="1"/>
</dbReference>
<dbReference type="Gene3D" id="3.40.50.880">
    <property type="match status" value="1"/>
</dbReference>
<dbReference type="HAMAP" id="MF_00421">
    <property type="entry name" value="PurQ"/>
    <property type="match status" value="1"/>
</dbReference>
<dbReference type="InterPro" id="IPR029062">
    <property type="entry name" value="Class_I_gatase-like"/>
</dbReference>
<dbReference type="InterPro" id="IPR010075">
    <property type="entry name" value="PRibForGlyAmidine_synth_PurQ"/>
</dbReference>
<dbReference type="NCBIfam" id="TIGR01737">
    <property type="entry name" value="FGAM_synth_I"/>
    <property type="match status" value="1"/>
</dbReference>
<dbReference type="NCBIfam" id="NF002252">
    <property type="entry name" value="PRK01175.1"/>
    <property type="match status" value="1"/>
</dbReference>
<dbReference type="PANTHER" id="PTHR47552">
    <property type="entry name" value="PHOSPHORIBOSYLFORMYLGLYCINAMIDINE SYNTHASE SUBUNIT PURQ"/>
    <property type="match status" value="1"/>
</dbReference>
<dbReference type="PANTHER" id="PTHR47552:SF1">
    <property type="entry name" value="PHOSPHORIBOSYLFORMYLGLYCINAMIDINE SYNTHASE SUBUNIT PURQ"/>
    <property type="match status" value="1"/>
</dbReference>
<dbReference type="Pfam" id="PF13507">
    <property type="entry name" value="GATase_5"/>
    <property type="match status" value="1"/>
</dbReference>
<dbReference type="PIRSF" id="PIRSF001586">
    <property type="entry name" value="FGAM_synth_I"/>
    <property type="match status" value="1"/>
</dbReference>
<dbReference type="SMART" id="SM01211">
    <property type="entry name" value="GATase_5"/>
    <property type="match status" value="1"/>
</dbReference>
<dbReference type="SUPFAM" id="SSF52317">
    <property type="entry name" value="Class I glutamine amidotransferase-like"/>
    <property type="match status" value="1"/>
</dbReference>
<dbReference type="PROSITE" id="PS51273">
    <property type="entry name" value="GATASE_TYPE_1"/>
    <property type="match status" value="1"/>
</dbReference>
<comment type="function">
    <text evidence="1">Part of the phosphoribosylformylglycinamidine synthase complex involved in the purines biosynthetic pathway. Catalyzes the ATP-dependent conversion of formylglycinamide ribonucleotide (FGAR) and glutamine to yield formylglycinamidine ribonucleotide (FGAM) and glutamate. The FGAM synthase complex is composed of three subunits. PurQ produces an ammonia molecule by converting glutamine to glutamate. PurL transfers the ammonia molecule to FGAR to form FGAM in an ATP-dependent manner. PurS interacts with PurQ and PurL and is thought to assist in the transfer of the ammonia molecule from PurQ to PurL.</text>
</comment>
<comment type="catalytic activity">
    <reaction evidence="1">
        <text>N(2)-formyl-N(1)-(5-phospho-beta-D-ribosyl)glycinamide + L-glutamine + ATP + H2O = 2-formamido-N(1)-(5-O-phospho-beta-D-ribosyl)acetamidine + L-glutamate + ADP + phosphate + H(+)</text>
        <dbReference type="Rhea" id="RHEA:17129"/>
        <dbReference type="ChEBI" id="CHEBI:15377"/>
        <dbReference type="ChEBI" id="CHEBI:15378"/>
        <dbReference type="ChEBI" id="CHEBI:29985"/>
        <dbReference type="ChEBI" id="CHEBI:30616"/>
        <dbReference type="ChEBI" id="CHEBI:43474"/>
        <dbReference type="ChEBI" id="CHEBI:58359"/>
        <dbReference type="ChEBI" id="CHEBI:147286"/>
        <dbReference type="ChEBI" id="CHEBI:147287"/>
        <dbReference type="ChEBI" id="CHEBI:456216"/>
        <dbReference type="EC" id="6.3.5.3"/>
    </reaction>
</comment>
<comment type="catalytic activity">
    <reaction evidence="1">
        <text>L-glutamine + H2O = L-glutamate + NH4(+)</text>
        <dbReference type="Rhea" id="RHEA:15889"/>
        <dbReference type="ChEBI" id="CHEBI:15377"/>
        <dbReference type="ChEBI" id="CHEBI:28938"/>
        <dbReference type="ChEBI" id="CHEBI:29985"/>
        <dbReference type="ChEBI" id="CHEBI:58359"/>
        <dbReference type="EC" id="3.5.1.2"/>
    </reaction>
</comment>
<comment type="pathway">
    <text evidence="1">Purine metabolism; IMP biosynthesis via de novo pathway; 5-amino-1-(5-phospho-D-ribosyl)imidazole from N(2)-formyl-N(1)-(5-phospho-D-ribosyl)glycinamide: step 1/2.</text>
</comment>
<comment type="subunit">
    <text evidence="1">Part of the FGAM synthase complex composed of 1 PurL, 1 PurQ and 2 PurS subunits.</text>
</comment>
<comment type="subcellular location">
    <subcellularLocation>
        <location evidence="1">Cytoplasm</location>
    </subcellularLocation>
</comment>
<keyword id="KW-0067">ATP-binding</keyword>
<keyword id="KW-0963">Cytoplasm</keyword>
<keyword id="KW-0315">Glutamine amidotransferase</keyword>
<keyword id="KW-0378">Hydrolase</keyword>
<keyword id="KW-0436">Ligase</keyword>
<keyword id="KW-0547">Nucleotide-binding</keyword>
<keyword id="KW-0658">Purine biosynthesis</keyword>
<sequence length="258" mass="29034">MKQSPKIGILLMEGTNNETEVYYSVKRSGGSPDFIHINDLSAGRKRVSDYDGLIIPGGFSAGDYIRAGVIFAARLGAVAGKEIREFVDDGKPLIGICNGFQVLMEMGLIYDRSKITLTNNESNRFECRYTYMKMTSRNRIFQSGFYGKGVFQVPVAHAEGRIAVSERSVLKKLYENDQVVFKYSNENDVTDEYPWNPNGSIDSVASLSNEAGNVIGLMPHPERIYYRYQAMYLETEKDEVAGKIFYDSLVNYARDRNG</sequence>
<organism>
    <name type="scientific">Thermoplasma volcanium (strain ATCC 51530 / DSM 4299 / JCM 9571 / NBRC 15438 / GSS1)</name>
    <dbReference type="NCBI Taxonomy" id="273116"/>
    <lineage>
        <taxon>Archaea</taxon>
        <taxon>Methanobacteriati</taxon>
        <taxon>Thermoplasmatota</taxon>
        <taxon>Thermoplasmata</taxon>
        <taxon>Thermoplasmatales</taxon>
        <taxon>Thermoplasmataceae</taxon>
        <taxon>Thermoplasma</taxon>
    </lineage>
</organism>
<accession>Q97C36</accession>
<name>PURQ_THEVO</name>
<reference key="1">
    <citation type="journal article" date="2000" name="Proc. Natl. Acad. Sci. U.S.A.">
        <title>Archaeal adaptation to higher temperatures revealed by genomic sequence of Thermoplasma volcanium.</title>
        <authorList>
            <person name="Kawashima T."/>
            <person name="Amano N."/>
            <person name="Koike H."/>
            <person name="Makino S."/>
            <person name="Higuchi S."/>
            <person name="Kawashima-Ohya Y."/>
            <person name="Watanabe K."/>
            <person name="Yamazaki M."/>
            <person name="Kanehori K."/>
            <person name="Kawamoto T."/>
            <person name="Nunoshiba T."/>
            <person name="Yamamoto Y."/>
            <person name="Aramaki H."/>
            <person name="Makino K."/>
            <person name="Suzuki M."/>
        </authorList>
    </citation>
    <scope>NUCLEOTIDE SEQUENCE [LARGE SCALE GENOMIC DNA]</scope>
    <source>
        <strain>ATCC 51530 / DSM 4299 / JCM 9571 / NBRC 15438 / GSS1</strain>
    </source>
</reference>
<protein>
    <recommendedName>
        <fullName evidence="1">Phosphoribosylformylglycinamidine synthase subunit PurQ</fullName>
        <shortName evidence="1">FGAM synthase</shortName>
        <ecNumber evidence="1">6.3.5.3</ecNumber>
    </recommendedName>
    <alternativeName>
        <fullName evidence="1">Formylglycinamide ribonucleotide amidotransferase subunit I</fullName>
        <shortName evidence="1">FGAR amidotransferase I</shortName>
        <shortName evidence="1">FGAR-AT I</shortName>
    </alternativeName>
    <alternativeName>
        <fullName evidence="1">Glutaminase PurQ</fullName>
        <ecNumber evidence="1">3.5.1.2</ecNumber>
    </alternativeName>
    <alternativeName>
        <fullName evidence="1">Phosphoribosylformylglycinamidine synthase subunit I</fullName>
    </alternativeName>
</protein>
<proteinExistence type="inferred from homology"/>
<gene>
    <name evidence="1" type="primary">purQ</name>
    <name type="ordered locus">TV0269</name>
    <name type="ORF">TVG0280999</name>
</gene>